<feature type="chain" id="PRO_0000173064" description="3-sulfolactaldehyde reductase">
    <location>
        <begin position="1"/>
        <end position="298"/>
    </location>
</feature>
<feature type="active site" evidence="1 8">
    <location>
        <position position="171"/>
    </location>
</feature>
<feature type="binding site" evidence="1 4 9 10">
    <location>
        <begin position="11"/>
        <end position="12"/>
    </location>
    <ligand>
        <name>NAD(+)</name>
        <dbReference type="ChEBI" id="CHEBI:57540"/>
    </ligand>
</feature>
<feature type="binding site" evidence="1 4 9 10">
    <location>
        <position position="31"/>
    </location>
    <ligand>
        <name>NAD(+)</name>
        <dbReference type="ChEBI" id="CHEBI:57540"/>
    </ligand>
</feature>
<feature type="binding site" evidence="1 4 9 10">
    <location>
        <position position="65"/>
    </location>
    <ligand>
        <name>NAD(+)</name>
        <dbReference type="ChEBI" id="CHEBI:57540"/>
    </ligand>
</feature>
<feature type="binding site" evidence="1 4 9 10">
    <location>
        <position position="96"/>
    </location>
    <ligand>
        <name>NAD(+)</name>
        <dbReference type="ChEBI" id="CHEBI:57540"/>
    </ligand>
</feature>
<feature type="binding site" evidence="1 4 9">
    <location>
        <position position="123"/>
    </location>
    <ligand>
        <name>2,3-dihydroxypropane-1-sulfonate</name>
        <dbReference type="ChEBI" id="CHEBI:77138"/>
    </ligand>
</feature>
<feature type="binding site" evidence="1 4 9">
    <location>
        <begin position="174"/>
        <end position="178"/>
    </location>
    <ligand>
        <name>2,3-dihydroxypropane-1-sulfonate</name>
        <dbReference type="ChEBI" id="CHEBI:77138"/>
    </ligand>
</feature>
<feature type="binding site" evidence="1 4 9">
    <location>
        <position position="240"/>
    </location>
    <ligand>
        <name>NAD(+)</name>
        <dbReference type="ChEBI" id="CHEBI:57540"/>
    </ligand>
</feature>
<feature type="mutagenesis site" description="25-fold decrease in catalytic efficiency with SLA as substrate. 5-fold decrease in catalytic efficiency with NADH as substrate." evidence="4">
    <original>G</original>
    <variation>S</variation>
    <location>
        <position position="122"/>
    </location>
</feature>
<feature type="mutagenesis site" description="130-fold decrease in catalytic efficiency with SLA as substrate. 3-fold decrease in catalytic efficiency with NADH as substrate." evidence="4">
    <original>R</original>
    <variation>G</variation>
    <location>
        <position position="123"/>
    </location>
</feature>
<feature type="mutagenesis site" description="230-fold decrease in catalytic efficiency with SLA as substrate. 12-fold decrease in catalytic efficiency with NADH as substrate." evidence="4">
    <original>T</original>
    <variation>G</variation>
    <location>
        <position position="124"/>
    </location>
</feature>
<feature type="strand" evidence="14">
    <location>
        <begin position="3"/>
        <end position="7"/>
    </location>
</feature>
<feature type="helix" evidence="14">
    <location>
        <begin position="13"/>
        <end position="22"/>
    </location>
</feature>
<feature type="strand" evidence="14">
    <location>
        <begin position="26"/>
        <end position="30"/>
    </location>
</feature>
<feature type="helix" evidence="14">
    <location>
        <begin position="34"/>
        <end position="42"/>
    </location>
</feature>
<feature type="helix" evidence="14">
    <location>
        <begin position="51"/>
        <end position="55"/>
    </location>
</feature>
<feature type="strand" evidence="14">
    <location>
        <begin position="59"/>
        <end position="63"/>
    </location>
</feature>
<feature type="helix" evidence="14">
    <location>
        <begin position="68"/>
        <end position="76"/>
    </location>
</feature>
<feature type="helix" evidence="14">
    <location>
        <begin position="81"/>
        <end position="84"/>
    </location>
</feature>
<feature type="strand" evidence="14">
    <location>
        <begin position="90"/>
        <end position="93"/>
    </location>
</feature>
<feature type="helix" evidence="14">
    <location>
        <begin position="99"/>
        <end position="111"/>
    </location>
</feature>
<feature type="strand" evidence="14">
    <location>
        <begin position="115"/>
        <end position="118"/>
    </location>
</feature>
<feature type="strand" evidence="14">
    <location>
        <begin position="121"/>
        <end position="123"/>
    </location>
</feature>
<feature type="helix" evidence="14">
    <location>
        <begin position="125"/>
        <end position="130"/>
    </location>
</feature>
<feature type="strand" evidence="14">
    <location>
        <begin position="133"/>
        <end position="137"/>
    </location>
</feature>
<feature type="helix" evidence="14">
    <location>
        <begin position="141"/>
        <end position="151"/>
    </location>
</feature>
<feature type="turn" evidence="14">
    <location>
        <begin position="152"/>
        <end position="154"/>
    </location>
</feature>
<feature type="strand" evidence="14">
    <location>
        <begin position="155"/>
        <end position="160"/>
    </location>
</feature>
<feature type="helix" evidence="14">
    <location>
        <begin position="166"/>
        <end position="194"/>
    </location>
</feature>
<feature type="helix" evidence="14">
    <location>
        <begin position="199"/>
        <end position="206"/>
    </location>
</feature>
<feature type="helix" evidence="14">
    <location>
        <begin position="210"/>
        <end position="213"/>
    </location>
</feature>
<feature type="turn" evidence="14">
    <location>
        <begin position="216"/>
        <end position="219"/>
    </location>
</feature>
<feature type="turn" evidence="14">
    <location>
        <begin position="221"/>
        <end position="223"/>
    </location>
</feature>
<feature type="helix" evidence="14">
    <location>
        <begin position="224"/>
        <end position="226"/>
    </location>
</feature>
<feature type="strand" evidence="14">
    <location>
        <begin position="232"/>
        <end position="234"/>
    </location>
</feature>
<feature type="helix" evidence="14">
    <location>
        <begin position="235"/>
        <end position="251"/>
    </location>
</feature>
<feature type="helix" evidence="14">
    <location>
        <begin position="257"/>
        <end position="271"/>
    </location>
</feature>
<feature type="helix" evidence="14">
    <location>
        <begin position="279"/>
        <end position="281"/>
    </location>
</feature>
<feature type="helix" evidence="14">
    <location>
        <begin position="282"/>
        <end position="289"/>
    </location>
</feature>
<sequence>MAAIAFIGLGQMGSPMASNLLQQGHQLRVFDVNAEAVRHLVDKGATPAANPAQAAKDAEFIITMLPNGDLVRNVLFGENGVCEGLSTDALVIDMSTIHPLQTDKLIADMQAKGFSMMDVPVGRTSANAITGTLLLLAGGTAEQVERATPILMAMGSELINAGGPGMGIRVKLINNYMSIALNALSAEAAVLCEALNLPFDVAVKVMSGTAAGKGHFTTSWPNKVLSGDLSPAFMIDLAHKDLGIALDVANQLHVPMPLGAASREVYSQARAAGRGRQDWSAILEQVRVSAGMTAKVKM</sequence>
<gene>
    <name type="primary">yihU</name>
    <name type="ordered locus">b3882</name>
    <name type="ordered locus">JW3853</name>
</gene>
<comment type="function">
    <text evidence="2 3 4">Reduces 3-sulfolactaldehyde (SLA) to 2,3-dihydroxypropane 1-sulfonate (DHPS) (PubMed:24463506, Ref.6). Metabolite profiling studies showed that the enzyme also catalyzes in vitro the NADH-dependent reduction of succinic semialdehyde (SSA) to 4-hydroxybutyrate (GHB), and that it could be involved in the metabolism of SSA, and other potentially toxic intermediates that may accumulate under stress conditions (PubMed:19372223). However, the enzyme exhibits a 42,000-fold greater catalytic efficiency for the reduction of SLA over SSA (Ref.6). Shows no detectable activity on the analogous glycolytic intermediate glyceraldehyde-3-phosphate (Ref.6).</text>
</comment>
<comment type="catalytic activity">
    <reaction evidence="1 3 4">
        <text>(2S)-3-sulfopropanediol + NAD(+) = (2S)-3-sulfolactaldehyde + NADH + H(+)</text>
        <dbReference type="Rhea" id="RHEA:40511"/>
        <dbReference type="ChEBI" id="CHEBI:15378"/>
        <dbReference type="ChEBI" id="CHEBI:57540"/>
        <dbReference type="ChEBI" id="CHEBI:57945"/>
        <dbReference type="ChEBI" id="CHEBI:90109"/>
        <dbReference type="ChEBI" id="CHEBI:176527"/>
        <dbReference type="EC" id="1.1.1.373"/>
    </reaction>
    <physiologicalReaction direction="right-to-left" evidence="3 4">
        <dbReference type="Rhea" id="RHEA:40513"/>
    </physiologicalReaction>
</comment>
<comment type="catalytic activity">
    <reaction evidence="2">
        <text>4-hydroxybutanoate + NAD(+) = succinate semialdehyde + NADH + H(+)</text>
        <dbReference type="Rhea" id="RHEA:23948"/>
        <dbReference type="ChEBI" id="CHEBI:15378"/>
        <dbReference type="ChEBI" id="CHEBI:16724"/>
        <dbReference type="ChEBI" id="CHEBI:57540"/>
        <dbReference type="ChEBI" id="CHEBI:57706"/>
        <dbReference type="ChEBI" id="CHEBI:57945"/>
        <dbReference type="EC" id="1.1.1.61"/>
    </reaction>
</comment>
<comment type="activity regulation">
    <text evidence="4">Inhibited by the NADH analogs tetrahydro-NADH and hexahydro-NADH.</text>
</comment>
<comment type="biophysicochemical properties">
    <kinetics>
        <KM evidence="4">0.3 mM for 3-sulfolactaldehyde</KM>
        <KM evidence="4">0.082 mM for NADH</KM>
        <KM evidence="2">4.3 mM for succinic semialdehyde</KM>
        <KM evidence="2">9 mM for methylglyoxal</KM>
        <KM evidence="2">102 mM for 4-hydroxybutyrate</KM>
        <KM evidence="2">1 mM for 3-hydroxypropane sulfonate</KM>
        <Vmax evidence="2">0.2 umol/min/mg enzyme with succinic semialdehyde as substrate</Vmax>
        <Vmax evidence="2">0.067 umol/min/mg enzyme with methylglyoxal as substrate</Vmax>
        <Vmax evidence="2">0.062 umol/min/mg enzyme with 4-hydroxybutyrate as substrate</Vmax>
        <Vmax evidence="2">9.0 umol/min/mg enzyme with 3-hydroxypropane sulfonate as substrate</Vmax>
        <text evidence="4">kcat is 332 sec(-1) with 3-sulfolactaldehyde as substrate. kcat is 548 sec(-1) with NADH as substrate.</text>
    </kinetics>
</comment>
<comment type="subunit">
    <text evidence="2 4">Homotetramer (PubMed:19372223, Ref.6). Dimer of dimers (Ref.6).</text>
</comment>
<comment type="induction">
    <text evidence="3">Induced during growth with sulfoquinovose.</text>
</comment>
<comment type="disruption phenotype">
    <text evidence="2">Deletion mutant displays reduced tolerance to the cytotoxic effects of exogenous addition of succinic semialdehyde.</text>
</comment>
<comment type="similarity">
    <text evidence="1 7">Belongs to the HIBADH-related family. 3-sulfolactaldehyde reductase subfamily.</text>
</comment>
<accession>P0A9V8</accession>
<accession>P32142</accession>
<accession>Q2M8H9</accession>
<evidence type="ECO:0000255" key="1">
    <source>
        <dbReference type="HAMAP-Rule" id="MF_01913"/>
    </source>
</evidence>
<evidence type="ECO:0000269" key="2">
    <source>
    </source>
</evidence>
<evidence type="ECO:0000269" key="3">
    <source>
    </source>
</evidence>
<evidence type="ECO:0000269" key="4">
    <source ref="6"/>
</evidence>
<evidence type="ECO:0000303" key="5">
    <source>
    </source>
</evidence>
<evidence type="ECO:0000303" key="6">
    <source>
    </source>
</evidence>
<evidence type="ECO:0000305" key="7"/>
<evidence type="ECO:0000305" key="8">
    <source ref="6"/>
</evidence>
<evidence type="ECO:0000312" key="9">
    <source>
        <dbReference type="PDB" id="6SMY"/>
    </source>
</evidence>
<evidence type="ECO:0000312" key="10">
    <source>
        <dbReference type="PDB" id="6SMZ"/>
    </source>
</evidence>
<evidence type="ECO:0007744" key="11">
    <source>
        <dbReference type="PDB" id="6SM7"/>
    </source>
</evidence>
<evidence type="ECO:0007744" key="12">
    <source>
        <dbReference type="PDB" id="6SMY"/>
    </source>
</evidence>
<evidence type="ECO:0007744" key="13">
    <source>
        <dbReference type="PDB" id="6SMZ"/>
    </source>
</evidence>
<evidence type="ECO:0007829" key="14">
    <source>
        <dbReference type="PDB" id="6SMZ"/>
    </source>
</evidence>
<name>SQUU_ECOLI</name>
<proteinExistence type="evidence at protein level"/>
<keyword id="KW-0002">3D-structure</keyword>
<keyword id="KW-0520">NAD</keyword>
<keyword id="KW-0560">Oxidoreductase</keyword>
<keyword id="KW-1185">Reference proteome</keyword>
<organism>
    <name type="scientific">Escherichia coli (strain K12)</name>
    <dbReference type="NCBI Taxonomy" id="83333"/>
    <lineage>
        <taxon>Bacteria</taxon>
        <taxon>Pseudomonadati</taxon>
        <taxon>Pseudomonadota</taxon>
        <taxon>Gammaproteobacteria</taxon>
        <taxon>Enterobacterales</taxon>
        <taxon>Enterobacteriaceae</taxon>
        <taxon>Escherichia</taxon>
    </lineage>
</organism>
<protein>
    <recommendedName>
        <fullName evidence="1 6">3-sulfolactaldehyde reductase</fullName>
        <shortName evidence="1 6">SLA reductase</shortName>
        <ecNumber evidence="1 3 4">1.1.1.373</ecNumber>
    </recommendedName>
    <alternativeName>
        <fullName evidence="7">4-hydroxybutyrate dehydrogenase</fullName>
        <ecNumber evidence="2">1.1.1.61</ecNumber>
    </alternativeName>
    <alternativeName>
        <fullName evidence="5">Gamma-hydroxybutyrate dehydrogenase</fullName>
        <shortName evidence="5">GHBDH</shortName>
    </alternativeName>
    <alternativeName>
        <fullName evidence="5">Succinic semialdehyde reductase</fullName>
        <shortName evidence="5">SSA reductase</shortName>
    </alternativeName>
</protein>
<dbReference type="EC" id="1.1.1.373" evidence="1 3 4"/>
<dbReference type="EC" id="1.1.1.61" evidence="2"/>
<dbReference type="EMBL" id="L19201">
    <property type="protein sequence ID" value="AAB03015.1"/>
    <property type="molecule type" value="Genomic_DNA"/>
</dbReference>
<dbReference type="EMBL" id="U00096">
    <property type="protein sequence ID" value="AAD13444.1"/>
    <property type="molecule type" value="Genomic_DNA"/>
</dbReference>
<dbReference type="EMBL" id="AP009048">
    <property type="protein sequence ID" value="BAE77427.1"/>
    <property type="molecule type" value="Genomic_DNA"/>
</dbReference>
<dbReference type="PIR" id="S40826">
    <property type="entry name" value="S40826"/>
</dbReference>
<dbReference type="RefSeq" id="NP_418318.1">
    <property type="nucleotide sequence ID" value="NC_000913.3"/>
</dbReference>
<dbReference type="RefSeq" id="WP_000718893.1">
    <property type="nucleotide sequence ID" value="NZ_SSZK01000026.1"/>
</dbReference>
<dbReference type="PDB" id="6SM7">
    <property type="method" value="X-ray"/>
    <property type="resolution" value="1.88 A"/>
    <property type="chains" value="A/B/C/D=1-298"/>
</dbReference>
<dbReference type="PDB" id="6SMY">
    <property type="method" value="X-ray"/>
    <property type="resolution" value="2.45 A"/>
    <property type="chains" value="A/B/C/D=1-298"/>
</dbReference>
<dbReference type="PDB" id="6SMZ">
    <property type="method" value="X-ray"/>
    <property type="resolution" value="1.75 A"/>
    <property type="chains" value="A/B/C/D=1-298"/>
</dbReference>
<dbReference type="PDBsum" id="6SM7"/>
<dbReference type="PDBsum" id="6SMY"/>
<dbReference type="PDBsum" id="6SMZ"/>
<dbReference type="SMR" id="P0A9V8"/>
<dbReference type="BioGRID" id="4260959">
    <property type="interactions" value="14"/>
</dbReference>
<dbReference type="DIP" id="DIP-48142N"/>
<dbReference type="FunCoup" id="P0A9V8">
    <property type="interactions" value="280"/>
</dbReference>
<dbReference type="IntAct" id="P0A9V8">
    <property type="interactions" value="7"/>
</dbReference>
<dbReference type="STRING" id="511145.b3882"/>
<dbReference type="PaxDb" id="511145-b3882"/>
<dbReference type="EnsemblBacteria" id="AAD13444">
    <property type="protein sequence ID" value="AAD13444"/>
    <property type="gene ID" value="b3882"/>
</dbReference>
<dbReference type="GeneID" id="75204553"/>
<dbReference type="GeneID" id="948372"/>
<dbReference type="KEGG" id="ecj:JW3853"/>
<dbReference type="KEGG" id="eco:b3882"/>
<dbReference type="KEGG" id="ecoc:C3026_20985"/>
<dbReference type="PATRIC" id="fig|1411691.4.peg.2829"/>
<dbReference type="EchoBASE" id="EB1793"/>
<dbReference type="eggNOG" id="COG2084">
    <property type="taxonomic scope" value="Bacteria"/>
</dbReference>
<dbReference type="HOGENOM" id="CLU_035117_1_1_6"/>
<dbReference type="InParanoid" id="P0A9V8"/>
<dbReference type="OMA" id="MGKKVWH"/>
<dbReference type="OrthoDB" id="9786703at2"/>
<dbReference type="PhylomeDB" id="P0A9V8"/>
<dbReference type="BioCyc" id="EcoCyc:EG11847-MONOMER"/>
<dbReference type="BioCyc" id="MetaCyc:EG11847-MONOMER"/>
<dbReference type="BRENDA" id="1.1.1.373">
    <property type="organism ID" value="2026"/>
</dbReference>
<dbReference type="BRENDA" id="1.1.1.61">
    <property type="organism ID" value="2026"/>
</dbReference>
<dbReference type="PRO" id="PR:P0A9V8"/>
<dbReference type="Proteomes" id="UP000000625">
    <property type="component" value="Chromosome"/>
</dbReference>
<dbReference type="GO" id="GO:0032991">
    <property type="term" value="C:protein-containing complex"/>
    <property type="evidence" value="ECO:0000314"/>
    <property type="project" value="EcoCyc"/>
</dbReference>
<dbReference type="GO" id="GO:0061596">
    <property type="term" value="F:3-sulfolactaldehyde reductase activity"/>
    <property type="evidence" value="ECO:0000314"/>
    <property type="project" value="EcoCyc"/>
</dbReference>
<dbReference type="GO" id="GO:0047577">
    <property type="term" value="F:4-hydroxybutyrate dehydrogenase activity"/>
    <property type="evidence" value="ECO:0000314"/>
    <property type="project" value="EcoCyc"/>
</dbReference>
<dbReference type="GO" id="GO:0042802">
    <property type="term" value="F:identical protein binding"/>
    <property type="evidence" value="ECO:0000314"/>
    <property type="project" value="EcoCyc"/>
</dbReference>
<dbReference type="GO" id="GO:0051287">
    <property type="term" value="F:NAD binding"/>
    <property type="evidence" value="ECO:0007669"/>
    <property type="project" value="InterPro"/>
</dbReference>
<dbReference type="GO" id="GO:0050661">
    <property type="term" value="F:NADP binding"/>
    <property type="evidence" value="ECO:0007669"/>
    <property type="project" value="InterPro"/>
</dbReference>
<dbReference type="GO" id="GO:0016616">
    <property type="term" value="F:oxidoreductase activity, acting on the CH-OH group of donors, NAD or NADP as acceptor"/>
    <property type="evidence" value="ECO:0000318"/>
    <property type="project" value="GO_Central"/>
</dbReference>
<dbReference type="GO" id="GO:1902777">
    <property type="term" value="P:6-sulfoquinovose(1-) catabolic process"/>
    <property type="evidence" value="ECO:0000270"/>
    <property type="project" value="EcoCyc"/>
</dbReference>
<dbReference type="GO" id="GO:0061720">
    <property type="term" value="P:6-sulfoquinovose(1-) catabolic process to glycerone phosphate and 3-sulfolactaldehyde"/>
    <property type="evidence" value="ECO:0000314"/>
    <property type="project" value="EcoCyc"/>
</dbReference>
<dbReference type="GO" id="GO:0051289">
    <property type="term" value="P:protein homotetramerization"/>
    <property type="evidence" value="ECO:0000314"/>
    <property type="project" value="EcoCyc"/>
</dbReference>
<dbReference type="GO" id="GO:0009407">
    <property type="term" value="P:toxin catabolic process"/>
    <property type="evidence" value="ECO:0000315"/>
    <property type="project" value="EcoCyc"/>
</dbReference>
<dbReference type="FunFam" id="1.10.1040.10:FF:000022">
    <property type="entry name" value="3-sulfolactaldehyde reductase"/>
    <property type="match status" value="1"/>
</dbReference>
<dbReference type="FunFam" id="3.40.50.720:FF:000352">
    <property type="entry name" value="3-sulfolactaldehyde reductase"/>
    <property type="match status" value="1"/>
</dbReference>
<dbReference type="Gene3D" id="1.10.1040.10">
    <property type="entry name" value="N-(1-d-carboxylethyl)-l-norvaline Dehydrogenase, domain 2"/>
    <property type="match status" value="1"/>
</dbReference>
<dbReference type="Gene3D" id="3.40.50.720">
    <property type="entry name" value="NAD(P)-binding Rossmann-like Domain"/>
    <property type="match status" value="1"/>
</dbReference>
<dbReference type="HAMAP" id="MF_01913">
    <property type="entry name" value="SLA_reductase"/>
    <property type="match status" value="1"/>
</dbReference>
<dbReference type="InterPro" id="IPR002204">
    <property type="entry name" value="3-OH-isobutyrate_DH-rel_CS"/>
</dbReference>
<dbReference type="InterPro" id="IPR008927">
    <property type="entry name" value="6-PGluconate_DH-like_C_sf"/>
</dbReference>
<dbReference type="InterPro" id="IPR013328">
    <property type="entry name" value="6PGD_dom2"/>
</dbReference>
<dbReference type="InterPro" id="IPR006115">
    <property type="entry name" value="6PGDH_NADP-bd"/>
</dbReference>
<dbReference type="InterPro" id="IPR029154">
    <property type="entry name" value="HIBADH-like_NADP-bd"/>
</dbReference>
<dbReference type="InterPro" id="IPR015815">
    <property type="entry name" value="HIBADH-related"/>
</dbReference>
<dbReference type="InterPro" id="IPR036291">
    <property type="entry name" value="NAD(P)-bd_dom_sf"/>
</dbReference>
<dbReference type="InterPro" id="IPR030876">
    <property type="entry name" value="SLA_reductase"/>
</dbReference>
<dbReference type="NCBIfam" id="NF012005">
    <property type="entry name" value="PRK15461.1"/>
    <property type="match status" value="1"/>
</dbReference>
<dbReference type="PANTHER" id="PTHR22981:SF7">
    <property type="entry name" value="3-HYDROXYISOBUTYRATE DEHYDROGENASE, MITOCHONDRIAL"/>
    <property type="match status" value="1"/>
</dbReference>
<dbReference type="PANTHER" id="PTHR22981">
    <property type="entry name" value="3-HYDROXYISOBUTYRATE DEHYDROGENASE-RELATED"/>
    <property type="match status" value="1"/>
</dbReference>
<dbReference type="Pfam" id="PF14833">
    <property type="entry name" value="NAD_binding_11"/>
    <property type="match status" value="1"/>
</dbReference>
<dbReference type="Pfam" id="PF03446">
    <property type="entry name" value="NAD_binding_2"/>
    <property type="match status" value="1"/>
</dbReference>
<dbReference type="PIRSF" id="PIRSF000103">
    <property type="entry name" value="HIBADH"/>
    <property type="match status" value="1"/>
</dbReference>
<dbReference type="SUPFAM" id="SSF48179">
    <property type="entry name" value="6-phosphogluconate dehydrogenase C-terminal domain-like"/>
    <property type="match status" value="1"/>
</dbReference>
<dbReference type="SUPFAM" id="SSF51735">
    <property type="entry name" value="NAD(P)-binding Rossmann-fold domains"/>
    <property type="match status" value="1"/>
</dbReference>
<dbReference type="PROSITE" id="PS00895">
    <property type="entry name" value="3_HYDROXYISOBUT_DH"/>
    <property type="match status" value="1"/>
</dbReference>
<reference key="1">
    <citation type="journal article" date="1993" name="Nucleic Acids Res.">
        <title>Analysis of the Escherichia coli genome. III. DNA sequence of the region from 87.2 to 89.2 minutes.</title>
        <authorList>
            <person name="Plunkett G. III"/>
            <person name="Burland V."/>
            <person name="Daniels D.L."/>
            <person name="Blattner F.R."/>
        </authorList>
    </citation>
    <scope>NUCLEOTIDE SEQUENCE [LARGE SCALE GENOMIC DNA]</scope>
    <source>
        <strain>K12 / MG1655 / ATCC 47076</strain>
    </source>
</reference>
<reference key="2">
    <citation type="journal article" date="1997" name="Science">
        <title>The complete genome sequence of Escherichia coli K-12.</title>
        <authorList>
            <person name="Blattner F.R."/>
            <person name="Plunkett G. III"/>
            <person name="Bloch C.A."/>
            <person name="Perna N.T."/>
            <person name="Burland V."/>
            <person name="Riley M."/>
            <person name="Collado-Vides J."/>
            <person name="Glasner J.D."/>
            <person name="Rode C.K."/>
            <person name="Mayhew G.F."/>
            <person name="Gregor J."/>
            <person name="Davis N.W."/>
            <person name="Kirkpatrick H.A."/>
            <person name="Goeden M.A."/>
            <person name="Rose D.J."/>
            <person name="Mau B."/>
            <person name="Shao Y."/>
        </authorList>
    </citation>
    <scope>NUCLEOTIDE SEQUENCE [LARGE SCALE GENOMIC DNA]</scope>
    <source>
        <strain>K12 / MG1655 / ATCC 47076</strain>
    </source>
</reference>
<reference key="3">
    <citation type="journal article" date="2006" name="Mol. Syst. Biol.">
        <title>Highly accurate genome sequences of Escherichia coli K-12 strains MG1655 and W3110.</title>
        <authorList>
            <person name="Hayashi K."/>
            <person name="Morooka N."/>
            <person name="Yamamoto Y."/>
            <person name="Fujita K."/>
            <person name="Isono K."/>
            <person name="Choi S."/>
            <person name="Ohtsubo E."/>
            <person name="Baba T."/>
            <person name="Wanner B.L."/>
            <person name="Mori H."/>
            <person name="Horiuchi T."/>
        </authorList>
    </citation>
    <scope>NUCLEOTIDE SEQUENCE [LARGE SCALE GENOMIC DNA]</scope>
    <source>
        <strain>K12 / W3110 / ATCC 27325 / DSM 5911</strain>
    </source>
</reference>
<reference key="4">
    <citation type="journal article" date="2009" name="J. Biol. Chem.">
        <title>Metabolite profiling reveals YihU as a novel hydroxybutyrate dehydrogenase for alternative succinic semialdehyde metabolism in Escherichia coli.</title>
        <authorList>
            <person name="Saito N."/>
            <person name="Robert M."/>
            <person name="Kochi H."/>
            <person name="Matsuo G."/>
            <person name="Kakazu Y."/>
            <person name="Soga T."/>
            <person name="Tomita M."/>
        </authorList>
    </citation>
    <scope>FUNCTION AS A SUCCINIC SEMIALDEHYDE REDUCTASE</scope>
    <scope>CATALYTIC ACTIVITY</scope>
    <scope>BIOPHYSICOCHEMICAL PROPERTIES</scope>
    <scope>SUBUNIT</scope>
    <scope>DISRUPTION PHENOTYPE</scope>
</reference>
<reference key="5">
    <citation type="journal article" date="2014" name="Nature">
        <title>Sulphoglycolysis in Escherichia coli K-12 closes a gap in the biogeochemical sulphur cycle.</title>
        <authorList>
            <person name="Denger K."/>
            <person name="Weiss M."/>
            <person name="Felux A.K."/>
            <person name="Schneider A."/>
            <person name="Mayer C."/>
            <person name="Spiteller D."/>
            <person name="Huhn T."/>
            <person name="Cook A.M."/>
            <person name="Schleheck D."/>
        </authorList>
    </citation>
    <scope>FUNCTION AS A SULFOLACTALDEHYDE REDUCTASE</scope>
    <scope>CATALYTIC ACTIVITY</scope>
    <scope>INDUCTION</scope>
    <scope>IDENTIFICATION BY MASS SPECTROMETRY</scope>
    <source>
        <strain>K12</strain>
    </source>
</reference>
<reference evidence="11 12 13" key="6">
    <citation type="journal article" date="2020" name="ACS Catal.">
        <title>Dynamic structural changes accompany the production of dihydroxypropanesulfonate by sulfolactaldehyde reductase.</title>
        <authorList>
            <person name="Sharma M."/>
            <person name="Abayakoon P."/>
            <person name="Lingford J.P."/>
            <person name="Epa R."/>
            <person name="John A."/>
            <person name="Jin Y."/>
            <person name="Goddard-Borger E.D."/>
            <person name="Davies G.J."/>
            <person name="Williams S.J."/>
        </authorList>
    </citation>
    <scope>X-RAY CRYSTALLOGRAPHY (1.75 ANGSTROMS) OF APOENZYME AND IN COMPLEXES WITH NAD AND 2,3-DIHYDROXYPROPANE-1-SULFONATE</scope>
    <scope>FUNCTION</scope>
    <scope>CATALYTIC ACTIVITY</scope>
    <scope>REACTION MECHANISM</scope>
    <scope>ACTIVITY REGULATION</scope>
    <scope>BIOPHYSICOCHEMICAL PROPERTIES</scope>
    <scope>SUBUNIT</scope>
    <scope>ACTIVE SITE</scope>
    <scope>MUTAGENESIS OF GLY-122; ARG-123 AND THR-124</scope>
</reference>